<dbReference type="EMBL" id="CP000395">
    <property type="protein sequence ID" value="ABH01289.1"/>
    <property type="molecule type" value="Genomic_DNA"/>
</dbReference>
<dbReference type="EMBL" id="CP002933">
    <property type="protein sequence ID" value="AEL69259.1"/>
    <property type="molecule type" value="Genomic_DNA"/>
</dbReference>
<dbReference type="RefSeq" id="WP_011600786.1">
    <property type="nucleotide sequence ID" value="NZ_CP160066.1"/>
</dbReference>
<dbReference type="SMR" id="Q0SPD9"/>
<dbReference type="STRING" id="29518.BLA32_04155"/>
<dbReference type="KEGG" id="baf:BAPKO_0024"/>
<dbReference type="KEGG" id="bafz:BafPKo_0025"/>
<dbReference type="PATRIC" id="fig|390236.22.peg.25"/>
<dbReference type="eggNOG" id="COG0217">
    <property type="taxonomic scope" value="Bacteria"/>
</dbReference>
<dbReference type="HOGENOM" id="CLU_062974_2_2_12"/>
<dbReference type="OrthoDB" id="9781053at2"/>
<dbReference type="Proteomes" id="UP000005216">
    <property type="component" value="Chromosome"/>
</dbReference>
<dbReference type="GO" id="GO:0005829">
    <property type="term" value="C:cytosol"/>
    <property type="evidence" value="ECO:0007669"/>
    <property type="project" value="TreeGrafter"/>
</dbReference>
<dbReference type="GO" id="GO:0003677">
    <property type="term" value="F:DNA binding"/>
    <property type="evidence" value="ECO:0007669"/>
    <property type="project" value="UniProtKB-UniRule"/>
</dbReference>
<dbReference type="GO" id="GO:0006355">
    <property type="term" value="P:regulation of DNA-templated transcription"/>
    <property type="evidence" value="ECO:0007669"/>
    <property type="project" value="UniProtKB-UniRule"/>
</dbReference>
<dbReference type="FunFam" id="1.10.10.200:FF:000002">
    <property type="entry name" value="Probable transcriptional regulatory protein CLM62_37755"/>
    <property type="match status" value="1"/>
</dbReference>
<dbReference type="Gene3D" id="1.10.10.200">
    <property type="match status" value="1"/>
</dbReference>
<dbReference type="Gene3D" id="3.30.70.980">
    <property type="match status" value="2"/>
</dbReference>
<dbReference type="HAMAP" id="MF_00693">
    <property type="entry name" value="Transcrip_reg_TACO1"/>
    <property type="match status" value="1"/>
</dbReference>
<dbReference type="InterPro" id="IPR017856">
    <property type="entry name" value="Integrase-like_N"/>
</dbReference>
<dbReference type="InterPro" id="IPR048300">
    <property type="entry name" value="TACO1_YebC-like_2nd/3rd_dom"/>
</dbReference>
<dbReference type="InterPro" id="IPR049083">
    <property type="entry name" value="TACO1_YebC_N"/>
</dbReference>
<dbReference type="InterPro" id="IPR002876">
    <property type="entry name" value="Transcrip_reg_TACO1-like"/>
</dbReference>
<dbReference type="InterPro" id="IPR026564">
    <property type="entry name" value="Transcrip_reg_TACO1-like_dom3"/>
</dbReference>
<dbReference type="InterPro" id="IPR029072">
    <property type="entry name" value="YebC-like"/>
</dbReference>
<dbReference type="NCBIfam" id="NF001030">
    <property type="entry name" value="PRK00110.1"/>
    <property type="match status" value="1"/>
</dbReference>
<dbReference type="NCBIfam" id="NF009044">
    <property type="entry name" value="PRK12378.1"/>
    <property type="match status" value="1"/>
</dbReference>
<dbReference type="NCBIfam" id="TIGR01033">
    <property type="entry name" value="YebC/PmpR family DNA-binding transcriptional regulator"/>
    <property type="match status" value="1"/>
</dbReference>
<dbReference type="PANTHER" id="PTHR12532:SF6">
    <property type="entry name" value="TRANSCRIPTIONAL REGULATORY PROTEIN YEBC-RELATED"/>
    <property type="match status" value="1"/>
</dbReference>
<dbReference type="PANTHER" id="PTHR12532">
    <property type="entry name" value="TRANSLATIONAL ACTIVATOR OF CYTOCHROME C OXIDASE 1"/>
    <property type="match status" value="1"/>
</dbReference>
<dbReference type="Pfam" id="PF20772">
    <property type="entry name" value="TACO1_YebC_N"/>
    <property type="match status" value="1"/>
</dbReference>
<dbReference type="Pfam" id="PF01709">
    <property type="entry name" value="Transcrip_reg"/>
    <property type="match status" value="1"/>
</dbReference>
<dbReference type="SUPFAM" id="SSF75625">
    <property type="entry name" value="YebC-like"/>
    <property type="match status" value="1"/>
</dbReference>
<gene>
    <name type="ordered locus">BAPKO_0024</name>
    <name type="ordered locus">BafPKo_0025</name>
</gene>
<accession>Q0SPD9</accession>
<accession>G0IQ55</accession>
<comment type="subcellular location">
    <subcellularLocation>
        <location evidence="1">Cytoplasm</location>
    </subcellularLocation>
</comment>
<comment type="similarity">
    <text evidence="1">Belongs to the TACO1 family.</text>
</comment>
<name>Y024_BORAP</name>
<protein>
    <recommendedName>
        <fullName evidence="1">Probable transcriptional regulatory protein BAPKO_0024/BafPKo_0025</fullName>
    </recommendedName>
</protein>
<feature type="chain" id="PRO_1000045276" description="Probable transcriptional regulatory protein BAPKO_0024/BafPKo_0025">
    <location>
        <begin position="1"/>
        <end position="243"/>
    </location>
</feature>
<sequence>MSGHSKWSTIKRKKGALDAKRNKIFTKLIREITIAAKIGGGDIESNPRLRVAVSKAKVANMPKDNIEKAIKKGIGGNEGVEYFEITYEAYAPYGVALMIKCLTDNKNRTSSDVKSVLAKGGGSLGTPGSVSYMFYRKGLVVYNLEKYLEDEIMEFALEFGAEDILVSNNEAEVITNPDDFDKVLSLLRTKFKEEMAEIALIPENKISLNKEQAEKIILLIEKLEDFDDVQEVIHNLEIPEELS</sequence>
<reference key="1">
    <citation type="journal article" date="2006" name="BMC Genomics">
        <title>Comparative genome analysis: selection pressure on the Borrelia vls cassettes is essential for infectivity.</title>
        <authorList>
            <person name="Gloeckner G."/>
            <person name="Schulte-Spechtel U."/>
            <person name="Schilhabel M."/>
            <person name="Felder M."/>
            <person name="Suehnel J."/>
            <person name="Wilske B."/>
            <person name="Platzer M."/>
        </authorList>
    </citation>
    <scope>NUCLEOTIDE SEQUENCE [LARGE SCALE GENOMIC DNA]</scope>
    <source>
        <strain>PKo</strain>
    </source>
</reference>
<reference key="2">
    <citation type="journal article" date="2011" name="J. Bacteriol.">
        <title>Whole-genome sequences of two Borrelia afzelii and two Borrelia garinii Lyme disease agent isolates.</title>
        <authorList>
            <person name="Casjens S.R."/>
            <person name="Mongodin E.F."/>
            <person name="Qiu W.G."/>
            <person name="Dunn J.J."/>
            <person name="Luft B.J."/>
            <person name="Fraser-Liggett C.M."/>
            <person name="Schutzer S.E."/>
        </authorList>
    </citation>
    <scope>NUCLEOTIDE SEQUENCE [LARGE SCALE GENOMIC DNA]</scope>
    <source>
        <strain>PKo</strain>
    </source>
</reference>
<organism>
    <name type="scientific">Borreliella afzelii (strain PKo)</name>
    <name type="common">Borrelia afzelii</name>
    <dbReference type="NCBI Taxonomy" id="390236"/>
    <lineage>
        <taxon>Bacteria</taxon>
        <taxon>Pseudomonadati</taxon>
        <taxon>Spirochaetota</taxon>
        <taxon>Spirochaetia</taxon>
        <taxon>Spirochaetales</taxon>
        <taxon>Borreliaceae</taxon>
        <taxon>Borreliella</taxon>
    </lineage>
</organism>
<evidence type="ECO:0000255" key="1">
    <source>
        <dbReference type="HAMAP-Rule" id="MF_00693"/>
    </source>
</evidence>
<keyword id="KW-0963">Cytoplasm</keyword>
<keyword id="KW-0238">DNA-binding</keyword>
<keyword id="KW-0804">Transcription</keyword>
<keyword id="KW-0805">Transcription regulation</keyword>
<proteinExistence type="inferred from homology"/>